<organism>
    <name type="scientific">Rhodopseudomonas palustris (strain BisA53)</name>
    <dbReference type="NCBI Taxonomy" id="316055"/>
    <lineage>
        <taxon>Bacteria</taxon>
        <taxon>Pseudomonadati</taxon>
        <taxon>Pseudomonadota</taxon>
        <taxon>Alphaproteobacteria</taxon>
        <taxon>Hyphomicrobiales</taxon>
        <taxon>Nitrobacteraceae</taxon>
        <taxon>Rhodopseudomonas</taxon>
    </lineage>
</organism>
<reference key="1">
    <citation type="submission" date="2006-09" db="EMBL/GenBank/DDBJ databases">
        <title>Complete sequence of Rhodopseudomonas palustris BisA53.</title>
        <authorList>
            <consortium name="US DOE Joint Genome Institute"/>
            <person name="Copeland A."/>
            <person name="Lucas S."/>
            <person name="Lapidus A."/>
            <person name="Barry K."/>
            <person name="Detter J.C."/>
            <person name="Glavina del Rio T."/>
            <person name="Hammon N."/>
            <person name="Israni S."/>
            <person name="Dalin E."/>
            <person name="Tice H."/>
            <person name="Pitluck S."/>
            <person name="Chain P."/>
            <person name="Malfatti S."/>
            <person name="Shin M."/>
            <person name="Vergez L."/>
            <person name="Schmutz J."/>
            <person name="Larimer F."/>
            <person name="Land M."/>
            <person name="Hauser L."/>
            <person name="Pelletier D.A."/>
            <person name="Kyrpides N."/>
            <person name="Kim E."/>
            <person name="Harwood C.S."/>
            <person name="Oda Y."/>
            <person name="Richardson P."/>
        </authorList>
    </citation>
    <scope>NUCLEOTIDE SEQUENCE [LARGE SCALE GENOMIC DNA]</scope>
    <source>
        <strain>BisA53</strain>
    </source>
</reference>
<sequence length="474" mass="52875">MTNIEQERWSRVKGRLRTTVGEDVYSSWFARMDLESVQQESVHLSVPTRFLKSWIQTHYSERVLSCWQAEMPEVHRIDLTVRTAMRCAAPAKEQAAPIEPRREDNRAAAHDLRVSATAPVSANHEALGGSPLDPRLTFSSFVVGRSNTLAHAAAKQVAEGRRGDPVMFNPLYIHSGVGLGKTHLLQAVTWAGNSGLERKVLYLTAEKFMYGFVAALKSQTALAFKEALRGIDVLVIDDLQFLQGKTTQAEFCHTLNALIDAGRQVVIAADRPPSDLESLDERVRSRLAGGLVVEMASLGEELRLGILKSRVTAARAHHASFEVPLPVLEYLAHSITHNGRDLEGAINRLLAHSKLNAQPVTLEMAEREVRDLIRPQEPKRIKIEDIQRVVARQYNVSRSDLLSSRRTANVVRPRQVAMYLAKTLTLRSLPEIGRRFGGRDHTTVLHAVRKIEGLVSKDAALSDEVESLKRQLQE</sequence>
<comment type="function">
    <text evidence="1">Plays an essential role in the initiation and regulation of chromosomal replication. ATP-DnaA binds to the origin of replication (oriC) to initiate formation of the DNA replication initiation complex once per cell cycle. Binds the DnaA box (a 9 base pair repeat at the origin) and separates the double-stranded (ds)DNA. Forms a right-handed helical filament on oriC DNA; dsDNA binds to the exterior of the filament while single-stranded (ss)DNA is stabiized in the filament's interior. The ATP-DnaA-oriC complex binds and stabilizes one strand of the AT-rich DNA unwinding element (DUE), permitting loading of DNA polymerase. After initiation quickly degrades to an ADP-DnaA complex that is not apt for DNA replication. Binds acidic phospholipids.</text>
</comment>
<comment type="subunit">
    <text evidence="1">Oligomerizes as a right-handed, spiral filament on DNA at oriC.</text>
</comment>
<comment type="subcellular location">
    <subcellularLocation>
        <location evidence="1">Cytoplasm</location>
    </subcellularLocation>
</comment>
<comment type="domain">
    <text evidence="1">Domain I is involved in oligomerization and binding regulators, domain II is flexibile and of varying length in different bacteria, domain III forms the AAA+ region, while domain IV binds dsDNA.</text>
</comment>
<comment type="similarity">
    <text evidence="1">Belongs to the DnaA family.</text>
</comment>
<accession>Q07VS2</accession>
<name>DNAA_RHOP5</name>
<keyword id="KW-0067">ATP-binding</keyword>
<keyword id="KW-0963">Cytoplasm</keyword>
<keyword id="KW-0235">DNA replication</keyword>
<keyword id="KW-0238">DNA-binding</keyword>
<keyword id="KW-0446">Lipid-binding</keyword>
<keyword id="KW-0547">Nucleotide-binding</keyword>
<feature type="chain" id="PRO_1000048703" description="Chromosomal replication initiator protein DnaA">
    <location>
        <begin position="1"/>
        <end position="474"/>
    </location>
</feature>
<feature type="region of interest" description="Domain I, interacts with DnaA modulators" evidence="1">
    <location>
        <begin position="1"/>
        <end position="73"/>
    </location>
</feature>
<feature type="region of interest" description="Domain II" evidence="1">
    <location>
        <begin position="73"/>
        <end position="130"/>
    </location>
</feature>
<feature type="region of interest" description="Domain III, AAA+ region" evidence="1">
    <location>
        <begin position="131"/>
        <end position="353"/>
    </location>
</feature>
<feature type="region of interest" description="Domain IV, binds dsDNA" evidence="1">
    <location>
        <begin position="354"/>
        <end position="474"/>
    </location>
</feature>
<feature type="binding site" evidence="1">
    <location>
        <position position="178"/>
    </location>
    <ligand>
        <name>ATP</name>
        <dbReference type="ChEBI" id="CHEBI:30616"/>
    </ligand>
</feature>
<feature type="binding site" evidence="1">
    <location>
        <position position="180"/>
    </location>
    <ligand>
        <name>ATP</name>
        <dbReference type="ChEBI" id="CHEBI:30616"/>
    </ligand>
</feature>
<feature type="binding site" evidence="1">
    <location>
        <position position="181"/>
    </location>
    <ligand>
        <name>ATP</name>
        <dbReference type="ChEBI" id="CHEBI:30616"/>
    </ligand>
</feature>
<feature type="binding site" evidence="1">
    <location>
        <position position="182"/>
    </location>
    <ligand>
        <name>ATP</name>
        <dbReference type="ChEBI" id="CHEBI:30616"/>
    </ligand>
</feature>
<proteinExistence type="inferred from homology"/>
<evidence type="ECO:0000255" key="1">
    <source>
        <dbReference type="HAMAP-Rule" id="MF_00377"/>
    </source>
</evidence>
<gene>
    <name evidence="1" type="primary">dnaA</name>
    <name type="ordered locus">RPE_0001</name>
</gene>
<dbReference type="EMBL" id="CP000463">
    <property type="protein sequence ID" value="ABJ03962.1"/>
    <property type="molecule type" value="Genomic_DNA"/>
</dbReference>
<dbReference type="SMR" id="Q07VS2"/>
<dbReference type="STRING" id="316055.RPE_0001"/>
<dbReference type="KEGG" id="rpe:RPE_0001"/>
<dbReference type="eggNOG" id="COG0593">
    <property type="taxonomic scope" value="Bacteria"/>
</dbReference>
<dbReference type="HOGENOM" id="CLU_026910_3_0_5"/>
<dbReference type="OrthoDB" id="9807019at2"/>
<dbReference type="GO" id="GO:0005737">
    <property type="term" value="C:cytoplasm"/>
    <property type="evidence" value="ECO:0007669"/>
    <property type="project" value="UniProtKB-SubCell"/>
</dbReference>
<dbReference type="GO" id="GO:0005886">
    <property type="term" value="C:plasma membrane"/>
    <property type="evidence" value="ECO:0007669"/>
    <property type="project" value="TreeGrafter"/>
</dbReference>
<dbReference type="GO" id="GO:0005524">
    <property type="term" value="F:ATP binding"/>
    <property type="evidence" value="ECO:0007669"/>
    <property type="project" value="UniProtKB-UniRule"/>
</dbReference>
<dbReference type="GO" id="GO:0016887">
    <property type="term" value="F:ATP hydrolysis activity"/>
    <property type="evidence" value="ECO:0007669"/>
    <property type="project" value="InterPro"/>
</dbReference>
<dbReference type="GO" id="GO:0003688">
    <property type="term" value="F:DNA replication origin binding"/>
    <property type="evidence" value="ECO:0007669"/>
    <property type="project" value="UniProtKB-UniRule"/>
</dbReference>
<dbReference type="GO" id="GO:0008289">
    <property type="term" value="F:lipid binding"/>
    <property type="evidence" value="ECO:0007669"/>
    <property type="project" value="UniProtKB-KW"/>
</dbReference>
<dbReference type="GO" id="GO:0006270">
    <property type="term" value="P:DNA replication initiation"/>
    <property type="evidence" value="ECO:0007669"/>
    <property type="project" value="UniProtKB-UniRule"/>
</dbReference>
<dbReference type="GO" id="GO:0006275">
    <property type="term" value="P:regulation of DNA replication"/>
    <property type="evidence" value="ECO:0007669"/>
    <property type="project" value="UniProtKB-UniRule"/>
</dbReference>
<dbReference type="CDD" id="cd00009">
    <property type="entry name" value="AAA"/>
    <property type="match status" value="1"/>
</dbReference>
<dbReference type="CDD" id="cd06571">
    <property type="entry name" value="Bac_DnaA_C"/>
    <property type="match status" value="1"/>
</dbReference>
<dbReference type="FunFam" id="1.10.1750.10:FF:000002">
    <property type="entry name" value="Chromosomal replication initiator protein DnaA"/>
    <property type="match status" value="1"/>
</dbReference>
<dbReference type="FunFam" id="3.40.50.300:FF:000668">
    <property type="entry name" value="Chromosomal replication initiator protein DnaA"/>
    <property type="match status" value="1"/>
</dbReference>
<dbReference type="Gene3D" id="1.10.1750.10">
    <property type="match status" value="1"/>
</dbReference>
<dbReference type="Gene3D" id="1.10.8.60">
    <property type="match status" value="1"/>
</dbReference>
<dbReference type="Gene3D" id="3.30.300.180">
    <property type="match status" value="1"/>
</dbReference>
<dbReference type="Gene3D" id="3.40.50.300">
    <property type="entry name" value="P-loop containing nucleotide triphosphate hydrolases"/>
    <property type="match status" value="1"/>
</dbReference>
<dbReference type="HAMAP" id="MF_00377">
    <property type="entry name" value="DnaA_bact"/>
    <property type="match status" value="1"/>
</dbReference>
<dbReference type="InterPro" id="IPR003593">
    <property type="entry name" value="AAA+_ATPase"/>
</dbReference>
<dbReference type="InterPro" id="IPR001957">
    <property type="entry name" value="Chromosome_initiator_DnaA"/>
</dbReference>
<dbReference type="InterPro" id="IPR020591">
    <property type="entry name" value="Chromosome_initiator_DnaA-like"/>
</dbReference>
<dbReference type="InterPro" id="IPR018312">
    <property type="entry name" value="Chromosome_initiator_DnaA_CS"/>
</dbReference>
<dbReference type="InterPro" id="IPR013159">
    <property type="entry name" value="DnaA_C"/>
</dbReference>
<dbReference type="InterPro" id="IPR013317">
    <property type="entry name" value="DnaA_dom"/>
</dbReference>
<dbReference type="InterPro" id="IPR024633">
    <property type="entry name" value="DnaA_N_dom"/>
</dbReference>
<dbReference type="InterPro" id="IPR038454">
    <property type="entry name" value="DnaA_N_sf"/>
</dbReference>
<dbReference type="InterPro" id="IPR027417">
    <property type="entry name" value="P-loop_NTPase"/>
</dbReference>
<dbReference type="InterPro" id="IPR010921">
    <property type="entry name" value="Trp_repressor/repl_initiator"/>
</dbReference>
<dbReference type="NCBIfam" id="TIGR00362">
    <property type="entry name" value="DnaA"/>
    <property type="match status" value="1"/>
</dbReference>
<dbReference type="PANTHER" id="PTHR30050">
    <property type="entry name" value="CHROMOSOMAL REPLICATION INITIATOR PROTEIN DNAA"/>
    <property type="match status" value="1"/>
</dbReference>
<dbReference type="PANTHER" id="PTHR30050:SF2">
    <property type="entry name" value="CHROMOSOMAL REPLICATION INITIATOR PROTEIN DNAA"/>
    <property type="match status" value="1"/>
</dbReference>
<dbReference type="Pfam" id="PF00308">
    <property type="entry name" value="Bac_DnaA"/>
    <property type="match status" value="1"/>
</dbReference>
<dbReference type="Pfam" id="PF08299">
    <property type="entry name" value="Bac_DnaA_C"/>
    <property type="match status" value="1"/>
</dbReference>
<dbReference type="Pfam" id="PF11638">
    <property type="entry name" value="DnaA_N"/>
    <property type="match status" value="1"/>
</dbReference>
<dbReference type="PRINTS" id="PR00051">
    <property type="entry name" value="DNAA"/>
</dbReference>
<dbReference type="SMART" id="SM00382">
    <property type="entry name" value="AAA"/>
    <property type="match status" value="1"/>
</dbReference>
<dbReference type="SMART" id="SM00760">
    <property type="entry name" value="Bac_DnaA_C"/>
    <property type="match status" value="1"/>
</dbReference>
<dbReference type="SUPFAM" id="SSF52540">
    <property type="entry name" value="P-loop containing nucleoside triphosphate hydrolases"/>
    <property type="match status" value="1"/>
</dbReference>
<dbReference type="SUPFAM" id="SSF48295">
    <property type="entry name" value="TrpR-like"/>
    <property type="match status" value="1"/>
</dbReference>
<dbReference type="PROSITE" id="PS01008">
    <property type="entry name" value="DNAA"/>
    <property type="match status" value="1"/>
</dbReference>
<protein>
    <recommendedName>
        <fullName evidence="1">Chromosomal replication initiator protein DnaA</fullName>
    </recommendedName>
</protein>